<proteinExistence type="evidence at transcript level"/>
<gene>
    <name type="primary">Iqca1l</name>
    <name type="synonym">Iqca1p1</name>
</gene>
<sequence>MSEGTYQRLWEASHATLEEVLEKEPSPLEPVLTRERQSFQYRISVLYLYYLGLLRRFNLAYDQMVQPQKRRLLRRLLDGVAGRVLELKDELVRVDLCETHCLDRVLQELKLTPVDLEVPIPKYFQLEQTSTMKARQQMLAEILARLEPLASQENLRGMSRTEALIIVQCAERARQGRLRATFMREIRKEEERDRRIRENGRQKFSQDQGAIVIQKVWKGYLQRKRIEQDRRMEMEFIGMLPSSSQTTRQNALAQAFVGEESRRTRQVEKEEEFQEAIAKTHESLTETEGPDMKERMKDQIRQWFIECHALTGRFPDYPDEASGGSYLIFADKTPEQVRQELEAQAQENKKKEQEKNKDKVKEKKEKKKKKTKEEKAKKDPEVMFKVLPSKSIPVINAGHEEFTSIWKSRYDNKHPSQSFDSETLREEKRKQVEMEIRVQVDELMRQELRNLRLAVDREETRPLKSPKKKGGKKSGKKKKEKDLTPDRSVDSLFEELVVIGLIKKSLLVTLNDYIGDCLYLGSTLTLANKIPMPSLFDIRQNIALYGVLRLGSHDIHTMAPLVRSILLVGPSGMGKKMLVQAVCTETGANLFDLSPGNVMGKYPGKNGSQLLMHIVFKVARVFQPSVIWIGNTEKTFYKKIPKEERRMDPKRIKKDLMRATRQLGPGDRVMLIGTTERPQLAEMKGLCRFYERILFIPRPDYASRYVLWKRMIENQGIGVQQTQSLDISALARVSDGYTPGHILQSIQSVLTERRLLQLTKKPLVASEFVVHLAKLDPVYREEEESLKEWFYKTPLGKKNIKFTKDQQEAEEARLAKEKKKKK</sequence>
<name>IQCAL_RAT</name>
<organism>
    <name type="scientific">Rattus norvegicus</name>
    <name type="common">Rat</name>
    <dbReference type="NCBI Taxonomy" id="10116"/>
    <lineage>
        <taxon>Eukaryota</taxon>
        <taxon>Metazoa</taxon>
        <taxon>Chordata</taxon>
        <taxon>Craniata</taxon>
        <taxon>Vertebrata</taxon>
        <taxon>Euteleostomi</taxon>
        <taxon>Mammalia</taxon>
        <taxon>Eutheria</taxon>
        <taxon>Euarchontoglires</taxon>
        <taxon>Glires</taxon>
        <taxon>Rodentia</taxon>
        <taxon>Myomorpha</taxon>
        <taxon>Muroidea</taxon>
        <taxon>Muridae</taxon>
        <taxon>Murinae</taxon>
        <taxon>Rattus</taxon>
    </lineage>
</organism>
<accession>Q6AXQ7</accession>
<evidence type="ECO:0000255" key="1"/>
<evidence type="ECO:0000255" key="2">
    <source>
        <dbReference type="PROSITE-ProRule" id="PRU00116"/>
    </source>
</evidence>
<evidence type="ECO:0000256" key="3">
    <source>
        <dbReference type="SAM" id="MobiDB-lite"/>
    </source>
</evidence>
<evidence type="ECO:0000303" key="4">
    <source>
    </source>
</evidence>
<evidence type="ECO:0000305" key="5"/>
<comment type="alternative products">
    <event type="alternative splicing"/>
    <isoform>
        <id>Q6AXQ7-1</id>
        <name>1</name>
        <sequence type="displayed"/>
    </isoform>
    <isoform>
        <id>Q6AXQ7-2</id>
        <name>2</name>
        <sequence type="described" ref="VSP_034232"/>
    </isoform>
</comment>
<comment type="similarity">
    <text evidence="5">Belongs to the AAA ATPase family.</text>
</comment>
<keyword id="KW-0025">Alternative splicing</keyword>
<keyword id="KW-0067">ATP-binding</keyword>
<keyword id="KW-0547">Nucleotide-binding</keyword>
<keyword id="KW-1185">Reference proteome</keyword>
<reference key="1">
    <citation type="journal article" date="2004" name="Nature">
        <title>Genome sequence of the Brown Norway rat yields insights into mammalian evolution.</title>
        <authorList>
            <person name="Gibbs R.A."/>
            <person name="Weinstock G.M."/>
            <person name="Metzker M.L."/>
            <person name="Muzny D.M."/>
            <person name="Sodergren E.J."/>
            <person name="Scherer S."/>
            <person name="Scott G."/>
            <person name="Steffen D."/>
            <person name="Worley K.C."/>
            <person name="Burch P.E."/>
            <person name="Okwuonu G."/>
            <person name="Hines S."/>
            <person name="Lewis L."/>
            <person name="Deramo C."/>
            <person name="Delgado O."/>
            <person name="Dugan-Rocha S."/>
            <person name="Miner G."/>
            <person name="Morgan M."/>
            <person name="Hawes A."/>
            <person name="Gill R."/>
            <person name="Holt R.A."/>
            <person name="Adams M.D."/>
            <person name="Amanatides P.G."/>
            <person name="Baden-Tillson H."/>
            <person name="Barnstead M."/>
            <person name="Chin S."/>
            <person name="Evans C.A."/>
            <person name="Ferriera S."/>
            <person name="Fosler C."/>
            <person name="Glodek A."/>
            <person name="Gu Z."/>
            <person name="Jennings D."/>
            <person name="Kraft C.L."/>
            <person name="Nguyen T."/>
            <person name="Pfannkoch C.M."/>
            <person name="Sitter C."/>
            <person name="Sutton G.G."/>
            <person name="Venter J.C."/>
            <person name="Woodage T."/>
            <person name="Smith D."/>
            <person name="Lee H.-M."/>
            <person name="Gustafson E."/>
            <person name="Cahill P."/>
            <person name="Kana A."/>
            <person name="Doucette-Stamm L."/>
            <person name="Weinstock K."/>
            <person name="Fechtel K."/>
            <person name="Weiss R.B."/>
            <person name="Dunn D.M."/>
            <person name="Green E.D."/>
            <person name="Blakesley R.W."/>
            <person name="Bouffard G.G."/>
            <person name="De Jong P.J."/>
            <person name="Osoegawa K."/>
            <person name="Zhu B."/>
            <person name="Marra M."/>
            <person name="Schein J."/>
            <person name="Bosdet I."/>
            <person name="Fjell C."/>
            <person name="Jones S."/>
            <person name="Krzywinski M."/>
            <person name="Mathewson C."/>
            <person name="Siddiqui A."/>
            <person name="Wye N."/>
            <person name="McPherson J."/>
            <person name="Zhao S."/>
            <person name="Fraser C.M."/>
            <person name="Shetty J."/>
            <person name="Shatsman S."/>
            <person name="Geer K."/>
            <person name="Chen Y."/>
            <person name="Abramzon S."/>
            <person name="Nierman W.C."/>
            <person name="Havlak P.H."/>
            <person name="Chen R."/>
            <person name="Durbin K.J."/>
            <person name="Egan A."/>
            <person name="Ren Y."/>
            <person name="Song X.-Z."/>
            <person name="Li B."/>
            <person name="Liu Y."/>
            <person name="Qin X."/>
            <person name="Cawley S."/>
            <person name="Cooney A.J."/>
            <person name="D'Souza L.M."/>
            <person name="Martin K."/>
            <person name="Wu J.Q."/>
            <person name="Gonzalez-Garay M.L."/>
            <person name="Jackson A.R."/>
            <person name="Kalafus K.J."/>
            <person name="McLeod M.P."/>
            <person name="Milosavljevic A."/>
            <person name="Virk D."/>
            <person name="Volkov A."/>
            <person name="Wheeler D.A."/>
            <person name="Zhang Z."/>
            <person name="Bailey J.A."/>
            <person name="Eichler E.E."/>
            <person name="Tuzun E."/>
            <person name="Birney E."/>
            <person name="Mongin E."/>
            <person name="Ureta-Vidal A."/>
            <person name="Woodwark C."/>
            <person name="Zdobnov E."/>
            <person name="Bork P."/>
            <person name="Suyama M."/>
            <person name="Torrents D."/>
            <person name="Alexandersson M."/>
            <person name="Trask B.J."/>
            <person name="Young J.M."/>
            <person name="Huang H."/>
            <person name="Wang H."/>
            <person name="Xing H."/>
            <person name="Daniels S."/>
            <person name="Gietzen D."/>
            <person name="Schmidt J."/>
            <person name="Stevens K."/>
            <person name="Vitt U."/>
            <person name="Wingrove J."/>
            <person name="Camara F."/>
            <person name="Mar Alba M."/>
            <person name="Abril J.F."/>
            <person name="Guigo R."/>
            <person name="Smit A."/>
            <person name="Dubchak I."/>
            <person name="Rubin E.M."/>
            <person name="Couronne O."/>
            <person name="Poliakov A."/>
            <person name="Huebner N."/>
            <person name="Ganten D."/>
            <person name="Goesele C."/>
            <person name="Hummel O."/>
            <person name="Kreitler T."/>
            <person name="Lee Y.-A."/>
            <person name="Monti J."/>
            <person name="Schulz H."/>
            <person name="Zimdahl H."/>
            <person name="Himmelbauer H."/>
            <person name="Lehrach H."/>
            <person name="Jacob H.J."/>
            <person name="Bromberg S."/>
            <person name="Gullings-Handley J."/>
            <person name="Jensen-Seaman M.I."/>
            <person name="Kwitek A.E."/>
            <person name="Lazar J."/>
            <person name="Pasko D."/>
            <person name="Tonellato P.J."/>
            <person name="Twigger S."/>
            <person name="Ponting C.P."/>
            <person name="Duarte J.M."/>
            <person name="Rice S."/>
            <person name="Goodstadt L."/>
            <person name="Beatson S.A."/>
            <person name="Emes R.D."/>
            <person name="Winter E.E."/>
            <person name="Webber C."/>
            <person name="Brandt P."/>
            <person name="Nyakatura G."/>
            <person name="Adetobi M."/>
            <person name="Chiaromonte F."/>
            <person name="Elnitski L."/>
            <person name="Eswara P."/>
            <person name="Hardison R.C."/>
            <person name="Hou M."/>
            <person name="Kolbe D."/>
            <person name="Makova K."/>
            <person name="Miller W."/>
            <person name="Nekrutenko A."/>
            <person name="Riemer C."/>
            <person name="Schwartz S."/>
            <person name="Taylor J."/>
            <person name="Yang S."/>
            <person name="Zhang Y."/>
            <person name="Lindpaintner K."/>
            <person name="Andrews T.D."/>
            <person name="Caccamo M."/>
            <person name="Clamp M."/>
            <person name="Clarke L."/>
            <person name="Curwen V."/>
            <person name="Durbin R.M."/>
            <person name="Eyras E."/>
            <person name="Searle S.M."/>
            <person name="Cooper G.M."/>
            <person name="Batzoglou S."/>
            <person name="Brudno M."/>
            <person name="Sidow A."/>
            <person name="Stone E.A."/>
            <person name="Payseur B.A."/>
            <person name="Bourque G."/>
            <person name="Lopez-Otin C."/>
            <person name="Puente X.S."/>
            <person name="Chakrabarti K."/>
            <person name="Chatterji S."/>
            <person name="Dewey C."/>
            <person name="Pachter L."/>
            <person name="Bray N."/>
            <person name="Yap V.B."/>
            <person name="Caspi A."/>
            <person name="Tesler G."/>
            <person name="Pevzner P.A."/>
            <person name="Haussler D."/>
            <person name="Roskin K.M."/>
            <person name="Baertsch R."/>
            <person name="Clawson H."/>
            <person name="Furey T.S."/>
            <person name="Hinrichs A.S."/>
            <person name="Karolchik D."/>
            <person name="Kent W.J."/>
            <person name="Rosenbloom K.R."/>
            <person name="Trumbower H."/>
            <person name="Weirauch M."/>
            <person name="Cooper D.N."/>
            <person name="Stenson P.D."/>
            <person name="Ma B."/>
            <person name="Brent M."/>
            <person name="Arumugam M."/>
            <person name="Shteynberg D."/>
            <person name="Copley R.R."/>
            <person name="Taylor M.S."/>
            <person name="Riethman H."/>
            <person name="Mudunuri U."/>
            <person name="Peterson J."/>
            <person name="Guyer M."/>
            <person name="Felsenfeld A."/>
            <person name="Old S."/>
            <person name="Mockrin S."/>
            <person name="Collins F.S."/>
        </authorList>
    </citation>
    <scope>NUCLEOTIDE SEQUENCE [LARGE SCALE GENOMIC DNA]</scope>
    <source>
        <strain>Brown Norway</strain>
    </source>
</reference>
<reference key="2">
    <citation type="journal article" date="2004" name="Genome Res.">
        <title>The status, quality, and expansion of the NIH full-length cDNA project: the Mammalian Gene Collection (MGC).</title>
        <authorList>
            <consortium name="The MGC Project Team"/>
        </authorList>
    </citation>
    <scope>NUCLEOTIDE SEQUENCE [LARGE SCALE MRNA] (ISOFORM 2)</scope>
    <source>
        <tissue>Testis</tissue>
    </source>
</reference>
<feature type="chain" id="PRO_0000341251" description="IQ and AAA domain-containing protein 1-like">
    <location>
        <begin position="1"/>
        <end position="822"/>
    </location>
</feature>
<feature type="domain" description="IQ" evidence="2">
    <location>
        <begin position="206"/>
        <end position="235"/>
    </location>
</feature>
<feature type="region of interest" description="Disordered" evidence="3">
    <location>
        <begin position="338"/>
        <end position="378"/>
    </location>
</feature>
<feature type="region of interest" description="Disordered" evidence="3">
    <location>
        <begin position="457"/>
        <end position="484"/>
    </location>
</feature>
<feature type="compositionally biased region" description="Basic and acidic residues" evidence="3">
    <location>
        <begin position="338"/>
        <end position="363"/>
    </location>
</feature>
<feature type="compositionally biased region" description="Basic residues" evidence="3">
    <location>
        <begin position="464"/>
        <end position="479"/>
    </location>
</feature>
<feature type="binding site" evidence="1">
    <location>
        <begin position="569"/>
        <end position="576"/>
    </location>
    <ligand>
        <name>ATP</name>
        <dbReference type="ChEBI" id="CHEBI:30616"/>
    </ligand>
</feature>
<feature type="splice variant" id="VSP_034232" description="In isoform 2." evidence="4">
    <location>
        <begin position="1"/>
        <end position="382"/>
    </location>
</feature>
<protein>
    <recommendedName>
        <fullName>IQ and AAA domain-containing protein 1-like</fullName>
    </recommendedName>
    <alternativeName>
        <fullName>Protein IQCA1P1</fullName>
    </alternativeName>
</protein>
<dbReference type="EMBL" id="AABR03033522">
    <property type="status" value="NOT_ANNOTATED_CDS"/>
    <property type="molecule type" value="Genomic_DNA"/>
</dbReference>
<dbReference type="EMBL" id="BC079392">
    <property type="protein sequence ID" value="AAH79392.1"/>
    <property type="molecule type" value="mRNA"/>
</dbReference>
<dbReference type="SMR" id="Q6AXQ7"/>
<dbReference type="FunCoup" id="Q6AXQ7">
    <property type="interactions" value="6"/>
</dbReference>
<dbReference type="STRING" id="10116.ENSRNOP00000014998"/>
<dbReference type="PhosphoSitePlus" id="Q6AXQ7"/>
<dbReference type="PaxDb" id="10116-ENSRNOP00000014998"/>
<dbReference type="AGR" id="RGD:1564789"/>
<dbReference type="RGD" id="1564789">
    <property type="gene designation" value="Iqca1l"/>
</dbReference>
<dbReference type="eggNOG" id="KOG0740">
    <property type="taxonomic scope" value="Eukaryota"/>
</dbReference>
<dbReference type="InParanoid" id="Q6AXQ7"/>
<dbReference type="PhylomeDB" id="Q6AXQ7"/>
<dbReference type="PRO" id="PR:Q6AXQ7"/>
<dbReference type="Proteomes" id="UP000002494">
    <property type="component" value="Unplaced"/>
</dbReference>
<dbReference type="GO" id="GO:0005524">
    <property type="term" value="F:ATP binding"/>
    <property type="evidence" value="ECO:0007669"/>
    <property type="project" value="UniProtKB-KW"/>
</dbReference>
<dbReference type="GO" id="GO:0016887">
    <property type="term" value="F:ATP hydrolysis activity"/>
    <property type="evidence" value="ECO:0007669"/>
    <property type="project" value="InterPro"/>
</dbReference>
<dbReference type="FunFam" id="1.10.8.60:FF:000092">
    <property type="entry name" value="IQ motif containing with AAA domain 1 like"/>
    <property type="match status" value="1"/>
</dbReference>
<dbReference type="Gene3D" id="1.10.8.60">
    <property type="match status" value="1"/>
</dbReference>
<dbReference type="Gene3D" id="3.40.50.300">
    <property type="entry name" value="P-loop containing nucleotide triphosphate hydrolases"/>
    <property type="match status" value="1"/>
</dbReference>
<dbReference type="InterPro" id="IPR003959">
    <property type="entry name" value="ATPase_AAA_core"/>
</dbReference>
<dbReference type="InterPro" id="IPR000048">
    <property type="entry name" value="IQ_motif_EF-hand-BS"/>
</dbReference>
<dbReference type="InterPro" id="IPR052267">
    <property type="entry name" value="N-DRC_Component"/>
</dbReference>
<dbReference type="InterPro" id="IPR027417">
    <property type="entry name" value="P-loop_NTPase"/>
</dbReference>
<dbReference type="PANTHER" id="PTHR14690:SF6">
    <property type="entry name" value="IQ AND AAA DOMAIN-CONTAINING PROTEIN 1-LIKE"/>
    <property type="match status" value="1"/>
</dbReference>
<dbReference type="PANTHER" id="PTHR14690">
    <property type="entry name" value="IQ MOTIF CONTAINING WITH AAA DOMAIN 1"/>
    <property type="match status" value="1"/>
</dbReference>
<dbReference type="Pfam" id="PF00004">
    <property type="entry name" value="AAA"/>
    <property type="match status" value="1"/>
</dbReference>
<dbReference type="Pfam" id="PF00612">
    <property type="entry name" value="IQ"/>
    <property type="match status" value="1"/>
</dbReference>
<dbReference type="SUPFAM" id="SSF52540">
    <property type="entry name" value="P-loop containing nucleoside triphosphate hydrolases"/>
    <property type="match status" value="1"/>
</dbReference>
<dbReference type="PROSITE" id="PS50096">
    <property type="entry name" value="IQ"/>
    <property type="match status" value="1"/>
</dbReference>